<comment type="function">
    <text evidence="1">Phosphorylation of dTMP to form dTDP in both de novo and salvage pathways of dTTP synthesis.</text>
</comment>
<comment type="catalytic activity">
    <reaction evidence="1">
        <text>dTMP + ATP = dTDP + ADP</text>
        <dbReference type="Rhea" id="RHEA:13517"/>
        <dbReference type="ChEBI" id="CHEBI:30616"/>
        <dbReference type="ChEBI" id="CHEBI:58369"/>
        <dbReference type="ChEBI" id="CHEBI:63528"/>
        <dbReference type="ChEBI" id="CHEBI:456216"/>
        <dbReference type="EC" id="2.7.4.9"/>
    </reaction>
</comment>
<comment type="similarity">
    <text evidence="1">Belongs to the thymidylate kinase family.</text>
</comment>
<sequence length="221" mass="24215">MQRRGWFITFEGIDGAGKSSHIEAVAEALRREGRTVTVTREPGGTPLAETLRSLLLNEAMDALTESLVVFAGRRDHLRSVIAPALVRGEVVLCDRFTDATFAYQGAGRGFDRAVLAQLERITQSGLQEGTDAVLHPHLTLWFDLAPDVAAARLEGARAPDRFEAQPVEFFRRVAQGYADRAAADPGRFARLDADQPREAVRAQLMEILHRRGVLDAAQEGG</sequence>
<evidence type="ECO:0000255" key="1">
    <source>
        <dbReference type="HAMAP-Rule" id="MF_00165"/>
    </source>
</evidence>
<organism>
    <name type="scientific">Paracidovorax citrulli (strain AAC00-1)</name>
    <name type="common">Acidovorax citrulli</name>
    <dbReference type="NCBI Taxonomy" id="397945"/>
    <lineage>
        <taxon>Bacteria</taxon>
        <taxon>Pseudomonadati</taxon>
        <taxon>Pseudomonadota</taxon>
        <taxon>Betaproteobacteria</taxon>
        <taxon>Burkholderiales</taxon>
        <taxon>Comamonadaceae</taxon>
        <taxon>Paracidovorax</taxon>
    </lineage>
</organism>
<accession>A1TSN1</accession>
<gene>
    <name evidence="1" type="primary">tmk</name>
    <name type="ordered locus">Aave_3412</name>
</gene>
<proteinExistence type="inferred from homology"/>
<name>KTHY_PARC0</name>
<protein>
    <recommendedName>
        <fullName evidence="1">Thymidylate kinase</fullName>
        <ecNumber evidence="1">2.7.4.9</ecNumber>
    </recommendedName>
    <alternativeName>
        <fullName evidence="1">dTMP kinase</fullName>
    </alternativeName>
</protein>
<feature type="chain" id="PRO_1000023139" description="Thymidylate kinase">
    <location>
        <begin position="1"/>
        <end position="221"/>
    </location>
</feature>
<feature type="binding site" evidence="1">
    <location>
        <begin position="12"/>
        <end position="19"/>
    </location>
    <ligand>
        <name>ATP</name>
        <dbReference type="ChEBI" id="CHEBI:30616"/>
    </ligand>
</feature>
<keyword id="KW-0067">ATP-binding</keyword>
<keyword id="KW-0418">Kinase</keyword>
<keyword id="KW-0545">Nucleotide biosynthesis</keyword>
<keyword id="KW-0547">Nucleotide-binding</keyword>
<keyword id="KW-0808">Transferase</keyword>
<reference key="1">
    <citation type="submission" date="2006-12" db="EMBL/GenBank/DDBJ databases">
        <title>Complete sequence of Acidovorax avenae subsp. citrulli AAC00-1.</title>
        <authorList>
            <person name="Copeland A."/>
            <person name="Lucas S."/>
            <person name="Lapidus A."/>
            <person name="Barry K."/>
            <person name="Detter J.C."/>
            <person name="Glavina del Rio T."/>
            <person name="Dalin E."/>
            <person name="Tice H."/>
            <person name="Pitluck S."/>
            <person name="Kiss H."/>
            <person name="Brettin T."/>
            <person name="Bruce D."/>
            <person name="Han C."/>
            <person name="Tapia R."/>
            <person name="Gilna P."/>
            <person name="Schmutz J."/>
            <person name="Larimer F."/>
            <person name="Land M."/>
            <person name="Hauser L."/>
            <person name="Kyrpides N."/>
            <person name="Kim E."/>
            <person name="Stahl D."/>
            <person name="Richardson P."/>
        </authorList>
    </citation>
    <scope>NUCLEOTIDE SEQUENCE [LARGE SCALE GENOMIC DNA]</scope>
    <source>
        <strain>AAC00-1</strain>
    </source>
</reference>
<dbReference type="EC" id="2.7.4.9" evidence="1"/>
<dbReference type="EMBL" id="CP000512">
    <property type="protein sequence ID" value="ABM33969.1"/>
    <property type="molecule type" value="Genomic_DNA"/>
</dbReference>
<dbReference type="RefSeq" id="WP_011796469.1">
    <property type="nucleotide sequence ID" value="NC_008752.1"/>
</dbReference>
<dbReference type="SMR" id="A1TSN1"/>
<dbReference type="STRING" id="397945.Aave_3412"/>
<dbReference type="GeneID" id="79793102"/>
<dbReference type="KEGG" id="aav:Aave_3412"/>
<dbReference type="eggNOG" id="COG0125">
    <property type="taxonomic scope" value="Bacteria"/>
</dbReference>
<dbReference type="HOGENOM" id="CLU_049131_0_2_4"/>
<dbReference type="OrthoDB" id="9774907at2"/>
<dbReference type="Proteomes" id="UP000002596">
    <property type="component" value="Chromosome"/>
</dbReference>
<dbReference type="GO" id="GO:0005829">
    <property type="term" value="C:cytosol"/>
    <property type="evidence" value="ECO:0007669"/>
    <property type="project" value="TreeGrafter"/>
</dbReference>
<dbReference type="GO" id="GO:0005524">
    <property type="term" value="F:ATP binding"/>
    <property type="evidence" value="ECO:0007669"/>
    <property type="project" value="UniProtKB-UniRule"/>
</dbReference>
<dbReference type="GO" id="GO:0004798">
    <property type="term" value="F:dTMP kinase activity"/>
    <property type="evidence" value="ECO:0007669"/>
    <property type="project" value="UniProtKB-UniRule"/>
</dbReference>
<dbReference type="GO" id="GO:0006233">
    <property type="term" value="P:dTDP biosynthetic process"/>
    <property type="evidence" value="ECO:0007669"/>
    <property type="project" value="InterPro"/>
</dbReference>
<dbReference type="GO" id="GO:0006235">
    <property type="term" value="P:dTTP biosynthetic process"/>
    <property type="evidence" value="ECO:0007669"/>
    <property type="project" value="UniProtKB-UniRule"/>
</dbReference>
<dbReference type="GO" id="GO:0006227">
    <property type="term" value="P:dUDP biosynthetic process"/>
    <property type="evidence" value="ECO:0007669"/>
    <property type="project" value="TreeGrafter"/>
</dbReference>
<dbReference type="CDD" id="cd01672">
    <property type="entry name" value="TMPK"/>
    <property type="match status" value="1"/>
</dbReference>
<dbReference type="FunFam" id="3.40.50.300:FF:000225">
    <property type="entry name" value="Thymidylate kinase"/>
    <property type="match status" value="1"/>
</dbReference>
<dbReference type="Gene3D" id="3.40.50.300">
    <property type="entry name" value="P-loop containing nucleotide triphosphate hydrolases"/>
    <property type="match status" value="1"/>
</dbReference>
<dbReference type="HAMAP" id="MF_00165">
    <property type="entry name" value="Thymidylate_kinase"/>
    <property type="match status" value="1"/>
</dbReference>
<dbReference type="InterPro" id="IPR027417">
    <property type="entry name" value="P-loop_NTPase"/>
</dbReference>
<dbReference type="InterPro" id="IPR039430">
    <property type="entry name" value="Thymidylate_kin-like_dom"/>
</dbReference>
<dbReference type="InterPro" id="IPR018094">
    <property type="entry name" value="Thymidylate_kinase"/>
</dbReference>
<dbReference type="NCBIfam" id="TIGR00041">
    <property type="entry name" value="DTMP_kinase"/>
    <property type="match status" value="1"/>
</dbReference>
<dbReference type="PANTHER" id="PTHR10344">
    <property type="entry name" value="THYMIDYLATE KINASE"/>
    <property type="match status" value="1"/>
</dbReference>
<dbReference type="PANTHER" id="PTHR10344:SF4">
    <property type="entry name" value="UMP-CMP KINASE 2, MITOCHONDRIAL"/>
    <property type="match status" value="1"/>
</dbReference>
<dbReference type="Pfam" id="PF02223">
    <property type="entry name" value="Thymidylate_kin"/>
    <property type="match status" value="1"/>
</dbReference>
<dbReference type="SUPFAM" id="SSF52540">
    <property type="entry name" value="P-loop containing nucleoside triphosphate hydrolases"/>
    <property type="match status" value="1"/>
</dbReference>